<protein>
    <recommendedName>
        <fullName>Insertion element IS629 uncharacterized 12 kDa protein</fullName>
    </recommendedName>
</protein>
<dbReference type="EMBL" id="X51586">
    <property type="protein sequence ID" value="CAA35935.1"/>
    <property type="molecule type" value="Genomic_DNA"/>
</dbReference>
<dbReference type="PIR" id="S03413">
    <property type="entry name" value="S03413"/>
</dbReference>
<dbReference type="RefSeq" id="WP_000165225.1">
    <property type="nucleotide sequence ID" value="NZ_CATNPK010000331.1"/>
</dbReference>
<dbReference type="SMR" id="P0A1V3"/>
<dbReference type="STRING" id="216599.GCA_000283715_03042"/>
<dbReference type="PATRIC" id="fig|624.635.peg.2970"/>
<dbReference type="OMA" id="YFAMAER"/>
<dbReference type="GO" id="GO:0003677">
    <property type="term" value="F:DNA binding"/>
    <property type="evidence" value="ECO:0007669"/>
    <property type="project" value="InterPro"/>
</dbReference>
<dbReference type="GO" id="GO:0004803">
    <property type="term" value="F:transposase activity"/>
    <property type="evidence" value="ECO:0007669"/>
    <property type="project" value="InterPro"/>
</dbReference>
<dbReference type="GO" id="GO:0006313">
    <property type="term" value="P:DNA transposition"/>
    <property type="evidence" value="ECO:0007669"/>
    <property type="project" value="InterPro"/>
</dbReference>
<dbReference type="Gene3D" id="1.10.10.10">
    <property type="entry name" value="Winged helix-like DNA-binding domain superfamily/Winged helix DNA-binding domain"/>
    <property type="match status" value="1"/>
</dbReference>
<dbReference type="InterPro" id="IPR009057">
    <property type="entry name" value="Homeodomain-like_sf"/>
</dbReference>
<dbReference type="InterPro" id="IPR002514">
    <property type="entry name" value="Transposase_8"/>
</dbReference>
<dbReference type="InterPro" id="IPR036388">
    <property type="entry name" value="WH-like_DNA-bd_sf"/>
</dbReference>
<dbReference type="Pfam" id="PF01527">
    <property type="entry name" value="HTH_Tnp_1"/>
    <property type="match status" value="1"/>
</dbReference>
<dbReference type="SUPFAM" id="SSF46689">
    <property type="entry name" value="Homeodomain-like"/>
    <property type="match status" value="1"/>
</dbReference>
<comment type="similarity">
    <text evidence="1">Belongs to the transposase 8 family.</text>
</comment>
<evidence type="ECO:0000305" key="1"/>
<organism>
    <name type="scientific">Shigella sonnei</name>
    <dbReference type="NCBI Taxonomy" id="624"/>
    <lineage>
        <taxon>Bacteria</taxon>
        <taxon>Pseudomonadati</taxon>
        <taxon>Pseudomonadota</taxon>
        <taxon>Gammaproteobacteria</taxon>
        <taxon>Enterobacterales</taxon>
        <taxon>Enterobacteriaceae</taxon>
        <taxon>Shigella</taxon>
    </lineage>
</organism>
<proteinExistence type="inferred from homology"/>
<name>YIS3_SHISO</name>
<feature type="chain" id="PRO_0000075504" description="Insertion element IS629 uncharacterized 12 kDa protein">
    <location>
        <begin position="1"/>
        <end position="108"/>
    </location>
</feature>
<keyword id="KW-0814">Transposable element</keyword>
<sequence length="108" mass="12583">MTKNTRFSPEVRQRAVRMVLESQGEYDSQWATICSIAPKIGCTPETLRVRVRQHERDTGGGDGGLTTAERQRLKELERENRELRRSNDILRQASAYFAKAEFDRLWKK</sequence>
<reference key="1">
    <citation type="journal article" date="1990" name="Nucleic Acids Res.">
        <title>Complete sequence of IS629.</title>
        <authorList>
            <person name="Matsutani S."/>
            <person name="Ohtsubo E."/>
        </authorList>
    </citation>
    <scope>NUCLEOTIDE SEQUENCE [GENOMIC DNA]</scope>
</reference>
<reference key="2">
    <citation type="journal article" date="1987" name="J. Mol. Biol.">
        <title>Isolation and characterization of IS elements repeated in the bacterial chromosome.</title>
        <authorList>
            <person name="Matsutani S."/>
            <person name="Ohtsubo H."/>
            <person name="Maeda Y."/>
            <person name="Ohtsubo E."/>
        </authorList>
    </citation>
    <scope>NUCLEOTIDE SEQUENCE [GENOMIC DNA]</scope>
</reference>
<accession>P0A1V3</accession>
<accession>P16941</accession>